<sequence>MVSKPFKPIVLNATFEWQVFKRCYLRVAPREAFCENLSELHHYFARRVNAWLKHATRTLPDGYTFVEEGLLDMFGTKAPDSVQEGTLFRELFGVDQTEQFPLSLADLAKLQGELVDATRTPGHALRQKYTMTTIQDLINKITKVVPVQATLTEMHARRQFERERADLFHELPLVDEDAVSQPKTYFYTMWRQVVKKGKAYFCPLVKTSAWRTKISAITEPIKDFLIAFCQAVQQEMGVNPQYLQLAWLQKLKPTTLTIILQQHKYTVSGWLATMTALVEVYSNLFDDLRKSSVAIVSSIGAFFDICKDFVSQVVELVKTTFTAQGPTDLGWAAVLAGAAMILLKMSGCPGVIGMWTKVLKICGGITTITAAARGVRWLKDLYEEAEGRRLAKMYMARGAALIELAASREVTGIDELKGLLDCFTILIEEGTELIHKFGTSPLAGLVRTYVSELETQANNIRSTIKLDTPRRVPVVIILTGAPGIGKTRLAQYVGQRFGKTSNFSVAVDHHDGYTGNTVCIWDEFDVDSKGAFVETMIGIANTAPFPLNCDRVENKGRVFTSDYVICTSNYPTSVIPDNPRAAAFYRRVLTVDVSAPDLEEWKKRNPGKRPTPDLYQDDFSHLKLMLRPYLGYNPDGDTLEGPRVAPTQISIAGLITLMERRFKEQAGPLQNLWLQVPKTLVEQSTNMVKAFMYANRAVCDVIPNPATRDIAETALTKIFVCGTAPPPEFVGKHIVITGIEVGDASIANSLLSMFTTTTRLSAAAQREYMYRVWSPLIHIQDRSINTQNLPYINRVIPVTSHWDFLRGLRHHLGFTSIPGMWKAFQGWRTSQGIVDFVAHHMADVTFPSNPECTIFRTPDADVVFYTFGSYVCFATPARVPYVGTPPTTIHSNTPRCMTWGETIALLCEVVAEFVLHFGPVILSAANIAYLMTRGSRTEEAKGKTKHGRGMRHGHRAGVSLSDDEYDEWRDLMRDWRRDMSVNDFLMLRERSALGVDDEDEARYRAWLEIRAMRMAGGAYTHATIIGRGGVRDEIIRTAPRRAPTRPQQHYEEEAPTAIVEFTQGGDHIGYGVHIGNGNVITVTHVASTSDEVNGSAFKITRTVGETTWVQGPFSQLPHMQIGSGSPVYFTTRLHPVFTISEGTFETPNITVNGFHVRIMNGYPTKKGDCGLPYFNSNRQLVALHAGTDTQGETKVAQRVVKEVTTQDEFQWKGLPVVKSGLDVGGMPTGTRYHRSPAWPEEQPGETHAPAPFGAGDKRYTFSQTEMLVNGLKPYTEPTAGVPPQLLSRAVTHVRSYIETIIGTHRSPVLTYHQACELLERTTSCGPFVQGLKGDYWDEEQQQYTGVLANHLEQAWDKANKGIAPRNAYKLALKDELRPIEKNKAGKRRLLWGCDAATTLIATAAFKAVATRLQVVTPMTPVAVGINMDSVQMQVMNDSLKGGVLYCLDYSKWDSTQNPAVTAASLAILERFAEPHPIVSCAIEALSSPAEGYVNDIKFVTRGGLPSGMPFTSVVNSINHMIYVAAAILQAYESHNVPYTGNVFQVETVHTYGDDCMYSVCPATASIFHAVLANLTSYGLKPTAADKSDAIKPTNTPVFLKRTFTQTPHGVRALLDITSITRQFYWLKANRTSDPSSPPAFDRQARSAQLENALAYASQHGPVVFDTVRQIAIKTAQGEGLVLVNTNYDQALATYNAWFIGGTVPDPVGHTEGTHKIVFEMEGNGSNPEPKQSNNPMVVDPPGTTGPTTSHVVVANPEQPNGAAQRLELAVATGAIQSNVPEAIRNCFAVFRTFAWNDRMPTGTFLGSISLHPNINPYTAHLSGMWAGWGGSFEVRLSISGSGVFAGRIIASVIPPGVDPSSIRDPGVLPHAFVDARITEPVSFMIPDVRAVDYHRMDGAEPTCSLGFWVYQPLLNPFSTTAVSTCWVSVETKPGGDFDFCLLRPPGQQMENGVSPEGLLPRRLGYSRGNRVGGLVVGMVLVAEHKQVNRHFNSNSVTFGWSTAPVNPMAAEIVTNQAHSTSRHAWLSIGAQNKGPLFPGIPNHFPDSCASTIVGAMDTSLGGRPSTGVCGPAISFQNNGDVYENDTPSVMFATYDPLTSGTGVALTNSINPASLALVRISNNDFDTSGFANDKNVVVQMSWEMYTGTNQIRGQVTPMSGTNYTFTSTGANTLVLWQERMLSYDGHQAILYSSQLERTAEYFQNDIVNIPENSMAVFNVETNSASFQIGIRPDGYMVTGGSIGINVPLEPETRFQYVGILPLSAALSGPSGNMGRARRVFQ</sequence>
<feature type="chain" id="PRO_0000342108" description="Genome polyprotein">
    <location>
        <begin position="1"/>
        <end position="2280"/>
    </location>
</feature>
<feature type="chain" id="PRO_0000342109" description="NS1">
    <location>
        <begin position="1"/>
        <end position="68"/>
    </location>
</feature>
<feature type="chain" id="PRO_0000342110" description="NS2">
    <location>
        <begin position="69"/>
        <end position="324"/>
    </location>
</feature>
<feature type="chain" id="PRO_0000342111" description="NTPase">
    <location>
        <begin position="325"/>
        <end position="665"/>
    </location>
</feature>
<feature type="chain" id="PRO_0000342112" description="NS4">
    <location>
        <begin position="666"/>
        <end position="939"/>
    </location>
</feature>
<feature type="chain" id="PRO_0000342113" description="Viral genome-linked protein">
    <location>
        <begin position="940"/>
        <end position="1053"/>
    </location>
</feature>
<feature type="chain" id="PRO_0000342114" description="Protease-polymerase p70">
    <location>
        <begin position="1054"/>
        <end position="1721"/>
    </location>
</feature>
<feature type="chain" id="PRO_0000342115" description="Capsid protein">
    <location>
        <begin position="1722"/>
        <end position="2280"/>
    </location>
</feature>
<feature type="domain" description="SF3 helicase" evidence="10">
    <location>
        <begin position="454"/>
        <end position="608"/>
    </location>
</feature>
<feature type="domain" description="Peptidase C24" evidence="11">
    <location>
        <begin position="1054"/>
        <end position="1202"/>
    </location>
</feature>
<feature type="domain" description="RdRp catalytic" evidence="9">
    <location>
        <begin position="1442"/>
        <end position="1567"/>
    </location>
</feature>
<feature type="region of interest" description="Disordered" evidence="12">
    <location>
        <begin position="1722"/>
        <end position="1746"/>
    </location>
</feature>
<feature type="compositionally biased region" description="Polar residues" evidence="12">
    <location>
        <begin position="1723"/>
        <end position="1735"/>
    </location>
</feature>
<feature type="active site" description="For 3CLpro activity" evidence="11">
    <location>
        <position position="1084"/>
    </location>
</feature>
<feature type="active site" description="For 3CLpro activity" evidence="11">
    <location>
        <position position="1105"/>
    </location>
</feature>
<feature type="active site" description="For 3CLpro activity" evidence="11">
    <location>
        <position position="1169"/>
    </location>
</feature>
<feature type="binding site" evidence="10">
    <location>
        <begin position="480"/>
        <end position="487"/>
    </location>
    <ligand>
        <name>ATP</name>
        <dbReference type="ChEBI" id="CHEBI:30616"/>
    </ligand>
</feature>
<feature type="site" description="Cleavage; by Pro-Pol" evidence="7">
    <location>
        <begin position="68"/>
        <end position="69"/>
    </location>
</feature>
<feature type="site" description="Cleavage; by Pro-Pol" evidence="7">
    <location>
        <begin position="324"/>
        <end position="325"/>
    </location>
</feature>
<feature type="site" description="Cleavage; by Pro-Pol" evidence="7">
    <location>
        <begin position="665"/>
        <end position="666"/>
    </location>
</feature>
<feature type="site" description="Cleavage; by Pro-Pol" evidence="7">
    <location>
        <begin position="939"/>
        <end position="940"/>
    </location>
</feature>
<feature type="site" description="Cleavage; by Pro-Pol" evidence="7">
    <location>
        <begin position="1053"/>
        <end position="1054"/>
    </location>
</feature>
<feature type="site" description="Cleavage; by Pro-Pol" evidence="7">
    <location>
        <begin position="1721"/>
        <end position="1722"/>
    </location>
</feature>
<feature type="modified residue" description="O-(5'-phospho-RNA)-tyrosine" evidence="2">
    <location>
        <position position="965"/>
    </location>
</feature>
<feature type="splice variant" id="VSP_034391" description="In isoform Subgenomic capsid protein." evidence="13">
    <location>
        <begin position="1"/>
        <end position="1719"/>
    </location>
</feature>
<accession>Q672I1</accession>
<keyword id="KW-0024">Alternative initiation</keyword>
<keyword id="KW-0877">Alternative promoter usage</keyword>
<keyword id="KW-0067">ATP-binding</keyword>
<keyword id="KW-0167">Capsid protein</keyword>
<keyword id="KW-0191">Covalent protein-RNA linkage</keyword>
<keyword id="KW-0235">DNA replication</keyword>
<keyword id="KW-1035">Host cytoplasm</keyword>
<keyword id="KW-0378">Hydrolase</keyword>
<keyword id="KW-0547">Nucleotide-binding</keyword>
<keyword id="KW-0548">Nucleotidyltransferase</keyword>
<keyword id="KW-0597">Phosphoprotein</keyword>
<keyword id="KW-0645">Protease</keyword>
<keyword id="KW-1185">Reference proteome</keyword>
<keyword id="KW-0696">RNA-directed RNA polymerase</keyword>
<keyword id="KW-0788">Thiol protease</keyword>
<keyword id="KW-0808">Transferase</keyword>
<keyword id="KW-0693">Viral RNA replication</keyword>
<keyword id="KW-0946">Virion</keyword>
<protein>
    <recommendedName>
        <fullName>Genome polyprotein</fullName>
    </recommendedName>
    <component>
        <recommendedName>
            <fullName>NS1</fullName>
        </recommendedName>
        <alternativeName>
            <fullName>Protein p11</fullName>
        </alternativeName>
    </component>
    <component>
        <recommendedName>
            <fullName>NS2</fullName>
        </recommendedName>
        <alternativeName>
            <fullName>Protein p28</fullName>
        </alternativeName>
    </component>
    <component>
        <recommendedName>
            <fullName>NTPase</fullName>
            <ecNumber evidence="4">3.6.1.15</ecNumber>
        </recommendedName>
        <alternativeName>
            <fullName>NS3</fullName>
        </alternativeName>
        <alternativeName>
            <fullName>p35</fullName>
        </alternativeName>
    </component>
    <component>
        <recommendedName>
            <fullName>NS4</fullName>
        </recommendedName>
        <alternativeName>
            <fullName>Protein p32</fullName>
        </alternativeName>
    </component>
    <component>
        <recommendedName>
            <fullName>Viral genome-linked protein</fullName>
            <shortName>VPg</shortName>
        </recommendedName>
        <alternativeName>
            <fullName>NS5</fullName>
        </alternativeName>
        <alternativeName>
            <fullName>p14</fullName>
        </alternativeName>
    </component>
    <component>
        <recommendedName>
            <fullName>Protease-polymerase p70</fullName>
            <shortName>Pro-Pol</shortName>
            <ecNumber evidence="6">2.7.7.48</ecNumber>
            <ecNumber evidence="7">3.4.22.66</ecNumber>
        </recommendedName>
        <alternativeName>
            <fullName>NS6-7</fullName>
        </alternativeName>
    </component>
    <component>
        <recommendedName>
            <fullName>Capsid protein</fullName>
            <shortName>CP</shortName>
        </recommendedName>
        <alternativeName>
            <fullName>VP1</fullName>
        </alternativeName>
        <alternativeName>
            <fullName>p60</fullName>
        </alternativeName>
    </component>
</protein>
<comment type="function">
    <molecule>NS2</molecule>
    <text evidence="3 5">Together with NTPase and NS4, initiates the formation of the replication complex (By similarity). Induces the proliferation of the host smooth ER membranes forming long tubular structures (By similarity). These remodeled membranes probably form the viral factories that contain the replication complex (By similarity).</text>
</comment>
<comment type="function">
    <molecule>NTPase</molecule>
    <text evidence="3 4 5">Displays NTPase activity, but no helicase activity (By similarity). Induces the formation of convoluted membranes derived from the host ER (By similarity). These remodeled membranes probably form the viral factories that contain the replication complex (By similarity). Together with NS2 and NS4, initiates the formation of the replication complex (By similarity).</text>
</comment>
<comment type="function">
    <molecule>NS4</molecule>
    <text evidence="3 5">Probable key protein responsible for the formation of membrane alterations by the virus (By similarity). Induces the formation of convoluted membranes derived from the host ER (By similarity). These remodeled membranes probably form the viral factories that contain the replication complex (By similarity). Together with NS2 and NTPase, initiates the formation of the replication complex (By similarity).</text>
</comment>
<comment type="function">
    <molecule>Viral genome-linked protein</molecule>
    <text evidence="2">Viral genome-linked protein is covalently linked to the 5'-end of the positive-strand, negative-strand genomic RNAs and subgenomic RNA. Acts as a genome-linked replication primer. May recruit ribosome to viral RNA thereby promoting viral proteins translation. Interacts with host translation initiation complex to allow the translation of viral proteins.</text>
</comment>
<comment type="function">
    <molecule>Protease-polymerase p70</molecule>
    <text evidence="5">Protease-polymerase p76 processes the polyprotein: Pro-Pol is first released by autocleavage, then all other proteins are cleaved (By similarity). Cleaves host translation initiation factor eIF4G1, eIF4G2 and PABP1 thereby inducing a shutdown of host protein synthesis (By similarity). This shutdown may not prevent viral mRNA from being translated since viral Vpg replaces the cap (By similarity). It is also an RNA-directed RNA polymerase which replicates genomic and antigenomic viral RNA by recognizing specific signals (By similarity). Also transcribes a subgenomic mRNA by initiating RNA synthesis internally on antigenomic RNA (By similarity). This sgRNA codes for structural proteins. Catalyzes the covalent attachment VPg with viral RNAs (By similarity).</text>
</comment>
<comment type="function">
    <molecule>Capsid protein</molecule>
    <text evidence="1 8">Capsid protein self assembles to form an icosahedral capsid with a T=3 symmetry, about 38 nm in diameter, and consisting of 180 capsid proteins (By similarity). The capsid encapsulate the genomic RNA and VP2 proteins. Attaches virion to target cells, inducing endocytosis of the viral particle. Acidification of the endosome induces conformational change of capsid protein thereby injecting virus genomic RNA into host cytoplasm (By similarity).</text>
</comment>
<comment type="catalytic activity">
    <molecule>NTPase</molecule>
    <reaction evidence="4">
        <text>a ribonucleoside 5'-triphosphate + H2O = a ribonucleoside 5'-diphosphate + phosphate + H(+)</text>
        <dbReference type="Rhea" id="RHEA:23680"/>
        <dbReference type="ChEBI" id="CHEBI:15377"/>
        <dbReference type="ChEBI" id="CHEBI:15378"/>
        <dbReference type="ChEBI" id="CHEBI:43474"/>
        <dbReference type="ChEBI" id="CHEBI:57930"/>
        <dbReference type="ChEBI" id="CHEBI:61557"/>
        <dbReference type="EC" id="3.6.1.15"/>
    </reaction>
</comment>
<comment type="catalytic activity">
    <molecule>Protease-polymerase p70</molecule>
    <reaction evidence="9">
        <text>RNA(n) + a ribonucleoside 5'-triphosphate = RNA(n+1) + diphosphate</text>
        <dbReference type="Rhea" id="RHEA:21248"/>
        <dbReference type="Rhea" id="RHEA-COMP:14527"/>
        <dbReference type="Rhea" id="RHEA-COMP:17342"/>
        <dbReference type="ChEBI" id="CHEBI:33019"/>
        <dbReference type="ChEBI" id="CHEBI:61557"/>
        <dbReference type="ChEBI" id="CHEBI:140395"/>
        <dbReference type="EC" id="2.7.7.48"/>
    </reaction>
</comment>
<comment type="catalytic activity">
    <molecule>Protease-polymerase p70</molecule>
    <reaction evidence="11">
        <text>Endopeptidase with a preference for cleavage when the P1 position is occupied by Glu-|-Xaa and the P1' position is occupied by Gly-|-Yaa.</text>
        <dbReference type="EC" id="3.4.22.66"/>
    </reaction>
</comment>
<comment type="subunit">
    <molecule>Capsid protein</molecule>
    <text evidence="8">Homodimer. Homomultimer.</text>
</comment>
<comment type="subcellular location">
    <molecule>Capsid protein</molecule>
    <subcellularLocation>
        <location>Virion</location>
    </subcellularLocation>
    <subcellularLocation>
        <location>Host cytoplasm</location>
    </subcellularLocation>
</comment>
<comment type="alternative products">
    <event type="alternative promoter"/>
    <event type="alternative initiation"/>
    <isoform>
        <id>Q672I1-1</id>
        <name>Genome polyprotein</name>
        <sequence type="displayed"/>
    </isoform>
    <isoform>
        <id>Q672I1-2</id>
        <name>Subgenomic capsid protein</name>
        <name>VP1</name>
        <sequence type="described" ref="VSP_034391"/>
    </isoform>
    <isoform>
        <id>Q672I0-1</id>
        <name>Uncharacterized protein VP3</name>
        <sequence type="external"/>
    </isoform>
</comment>
<comment type="domain">
    <molecule>Protease-polymerase p70</molecule>
    <text evidence="13">Protease-polymerase is composed of two domains displaying two different catalytic activity. These activities may act independently.</text>
</comment>
<comment type="PTM">
    <molecule>Genome polyprotein</molecule>
    <text evidence="5">Specific enzymatic cleavages in vivo yield mature proteins (By similarity). Pro-Pol is first autocatalytically cleaved, then processes the whole polyprotein (By similarity).</text>
</comment>
<comment type="PTM">
    <molecule>Viral genome-linked protein</molecule>
    <text evidence="5">VPg is uridylylated by the polymerase and is covalently attached to the 5'-end of the polyadenylated genomic and subgenomic RNAs. This uridylylated form acts as a nucleotide-peptide primer for the polymerase.</text>
</comment>
<comment type="miscellaneous">
    <text evidence="1">Two different RNAs lead the expression of the capsid protein. One arises from the cleavage of the polyprotein translated from the genomic RNA and the other from the translation of a subgenomic RNA derived from the (-)RNA template. Capsid protein expressed from the subgenomic mRNA is produced in much larger amounts than the cleaved one (By similarity).</text>
</comment>
<comment type="miscellaneous">
    <molecule>Isoform Genome polyprotein</molecule>
    <text>Produced from the genomic RNA.</text>
</comment>
<comment type="miscellaneous">
    <molecule>Isoform Subgenomic capsid protein</molecule>
    <text evidence="13">Produced from the subgenomic RNA by alternative promoter usage.</text>
</comment>
<dbReference type="EC" id="3.6.1.15" evidence="4"/>
<dbReference type="EC" id="2.7.7.48" evidence="6"/>
<dbReference type="EC" id="3.4.22.66" evidence="7"/>
<dbReference type="EMBL" id="AY694184">
    <property type="protein sequence ID" value="AAU09265.2"/>
    <property type="molecule type" value="Genomic_RNA"/>
</dbReference>
<dbReference type="RefSeq" id="YP_077278.1">
    <molecule id="Q672I1-1"/>
    <property type="nucleotide sequence ID" value="NC_006269.1"/>
</dbReference>
<dbReference type="SMR" id="Q672I1"/>
<dbReference type="MEROPS" id="C24.003"/>
<dbReference type="GeneID" id="5176815"/>
<dbReference type="KEGG" id="vg:5176815"/>
<dbReference type="Proteomes" id="UP000007049">
    <property type="component" value="Genome"/>
</dbReference>
<dbReference type="GO" id="GO:0030430">
    <property type="term" value="C:host cell cytoplasm"/>
    <property type="evidence" value="ECO:0007669"/>
    <property type="project" value="UniProtKB-SubCell"/>
</dbReference>
<dbReference type="GO" id="GO:0019028">
    <property type="term" value="C:viral capsid"/>
    <property type="evidence" value="ECO:0007669"/>
    <property type="project" value="UniProtKB-KW"/>
</dbReference>
<dbReference type="GO" id="GO:0005524">
    <property type="term" value="F:ATP binding"/>
    <property type="evidence" value="ECO:0007669"/>
    <property type="project" value="UniProtKB-KW"/>
</dbReference>
<dbReference type="GO" id="GO:0004197">
    <property type="term" value="F:cysteine-type endopeptidase activity"/>
    <property type="evidence" value="ECO:0007669"/>
    <property type="project" value="InterPro"/>
</dbReference>
<dbReference type="GO" id="GO:0017111">
    <property type="term" value="F:ribonucleoside triphosphate phosphatase activity"/>
    <property type="evidence" value="ECO:0007669"/>
    <property type="project" value="UniProtKB-EC"/>
</dbReference>
<dbReference type="GO" id="GO:0003723">
    <property type="term" value="F:RNA binding"/>
    <property type="evidence" value="ECO:0007669"/>
    <property type="project" value="InterPro"/>
</dbReference>
<dbReference type="GO" id="GO:0003724">
    <property type="term" value="F:RNA helicase activity"/>
    <property type="evidence" value="ECO:0007669"/>
    <property type="project" value="InterPro"/>
</dbReference>
<dbReference type="GO" id="GO:0003968">
    <property type="term" value="F:RNA-directed RNA polymerase activity"/>
    <property type="evidence" value="ECO:0007669"/>
    <property type="project" value="UniProtKB-KW"/>
</dbReference>
<dbReference type="GO" id="GO:0006260">
    <property type="term" value="P:DNA replication"/>
    <property type="evidence" value="ECO:0007669"/>
    <property type="project" value="UniProtKB-KW"/>
</dbReference>
<dbReference type="GO" id="GO:0006351">
    <property type="term" value="P:DNA-templated transcription"/>
    <property type="evidence" value="ECO:0007669"/>
    <property type="project" value="InterPro"/>
</dbReference>
<dbReference type="GO" id="GO:0006508">
    <property type="term" value="P:proteolysis"/>
    <property type="evidence" value="ECO:0007669"/>
    <property type="project" value="UniProtKB-KW"/>
</dbReference>
<dbReference type="GO" id="GO:0039694">
    <property type="term" value="P:viral RNA genome replication"/>
    <property type="evidence" value="ECO:0007669"/>
    <property type="project" value="InterPro"/>
</dbReference>
<dbReference type="CDD" id="cd23192">
    <property type="entry name" value="Caliciviridae_RdRp"/>
    <property type="match status" value="1"/>
</dbReference>
<dbReference type="CDD" id="cd00205">
    <property type="entry name" value="rhv_like"/>
    <property type="match status" value="1"/>
</dbReference>
<dbReference type="Gene3D" id="1.10.260.110">
    <property type="match status" value="1"/>
</dbReference>
<dbReference type="Gene3D" id="1.20.960.20">
    <property type="match status" value="1"/>
</dbReference>
<dbReference type="Gene3D" id="2.60.120.20">
    <property type="match status" value="1"/>
</dbReference>
<dbReference type="Gene3D" id="3.30.70.270">
    <property type="match status" value="2"/>
</dbReference>
<dbReference type="Gene3D" id="6.10.250.3230">
    <property type="match status" value="1"/>
</dbReference>
<dbReference type="Gene3D" id="3.40.50.300">
    <property type="entry name" value="P-loop containing nucleotide triphosphate hydrolases"/>
    <property type="match status" value="1"/>
</dbReference>
<dbReference type="InterPro" id="IPR004005">
    <property type="entry name" value="Calicivirus_coat"/>
</dbReference>
<dbReference type="InterPro" id="IPR043502">
    <property type="entry name" value="DNA/RNA_pol_sf"/>
</dbReference>
<dbReference type="InterPro" id="IPR004004">
    <property type="entry name" value="Helic/Pol/Pept_Calicivir-typ"/>
</dbReference>
<dbReference type="InterPro" id="IPR000605">
    <property type="entry name" value="Helicase_SF3_ssDNA/RNA_vir"/>
</dbReference>
<dbReference type="InterPro" id="IPR014759">
    <property type="entry name" value="Helicase_SF3_ssRNA_vir"/>
</dbReference>
<dbReference type="InterPro" id="IPR001665">
    <property type="entry name" value="Norovirus_pept_C37"/>
</dbReference>
<dbReference type="InterPro" id="IPR027417">
    <property type="entry name" value="P-loop_NTPase"/>
</dbReference>
<dbReference type="InterPro" id="IPR000317">
    <property type="entry name" value="Peptidase_C24"/>
</dbReference>
<dbReference type="InterPro" id="IPR009003">
    <property type="entry name" value="Peptidase_S1_PA"/>
</dbReference>
<dbReference type="InterPro" id="IPR043128">
    <property type="entry name" value="Rev_trsase/Diguanyl_cyclase"/>
</dbReference>
<dbReference type="InterPro" id="IPR033703">
    <property type="entry name" value="Rhv-like"/>
</dbReference>
<dbReference type="InterPro" id="IPR001205">
    <property type="entry name" value="RNA-dir_pol_C"/>
</dbReference>
<dbReference type="InterPro" id="IPR007094">
    <property type="entry name" value="RNA-dir_pol_PSvirus"/>
</dbReference>
<dbReference type="InterPro" id="IPR029053">
    <property type="entry name" value="Viral_coat"/>
</dbReference>
<dbReference type="InterPro" id="IPR049434">
    <property type="entry name" value="VPg"/>
</dbReference>
<dbReference type="Pfam" id="PF00915">
    <property type="entry name" value="Calici_coat"/>
    <property type="match status" value="1"/>
</dbReference>
<dbReference type="Pfam" id="PF03510">
    <property type="entry name" value="Peptidase_C24"/>
    <property type="match status" value="1"/>
</dbReference>
<dbReference type="Pfam" id="PF05416">
    <property type="entry name" value="Peptidase_C37"/>
    <property type="match status" value="1"/>
</dbReference>
<dbReference type="Pfam" id="PF00680">
    <property type="entry name" value="RdRP_1"/>
    <property type="match status" value="1"/>
</dbReference>
<dbReference type="Pfam" id="PF00910">
    <property type="entry name" value="RNA_helicase"/>
    <property type="match status" value="1"/>
</dbReference>
<dbReference type="Pfam" id="PF20915">
    <property type="entry name" value="VPg"/>
    <property type="match status" value="1"/>
</dbReference>
<dbReference type="PRINTS" id="PR00916">
    <property type="entry name" value="2CENDOPTASE"/>
</dbReference>
<dbReference type="PRINTS" id="PR00918">
    <property type="entry name" value="CALICVIRUSNS"/>
</dbReference>
<dbReference type="SUPFAM" id="SSF56672">
    <property type="entry name" value="DNA/RNA polymerases"/>
    <property type="match status" value="1"/>
</dbReference>
<dbReference type="SUPFAM" id="SSF52540">
    <property type="entry name" value="P-loop containing nucleoside triphosphate hydrolases"/>
    <property type="match status" value="1"/>
</dbReference>
<dbReference type="SUPFAM" id="SSF88633">
    <property type="entry name" value="Positive stranded ssRNA viruses"/>
    <property type="match status" value="1"/>
</dbReference>
<dbReference type="SUPFAM" id="SSF50494">
    <property type="entry name" value="Trypsin-like serine proteases"/>
    <property type="match status" value="1"/>
</dbReference>
<dbReference type="PROSITE" id="PS51894">
    <property type="entry name" value="CV_3CL_PRO"/>
    <property type="match status" value="1"/>
</dbReference>
<dbReference type="PROSITE" id="PS50507">
    <property type="entry name" value="RDRP_SSRNA_POS"/>
    <property type="match status" value="1"/>
</dbReference>
<dbReference type="PROSITE" id="PS51218">
    <property type="entry name" value="SF3_HELICASE_2"/>
    <property type="match status" value="1"/>
</dbReference>
<evidence type="ECO:0000250" key="1"/>
<evidence type="ECO:0000250" key="2">
    <source>
        <dbReference type="UniProtKB" id="P27409"/>
    </source>
</evidence>
<evidence type="ECO:0000250" key="3">
    <source>
        <dbReference type="UniProtKB" id="P54634"/>
    </source>
</evidence>
<evidence type="ECO:0000250" key="4">
    <source>
        <dbReference type="UniProtKB" id="Q04544"/>
    </source>
</evidence>
<evidence type="ECO:0000250" key="5">
    <source>
        <dbReference type="UniProtKB" id="Q66914"/>
    </source>
</evidence>
<evidence type="ECO:0000250" key="6">
    <source>
        <dbReference type="UniProtKB" id="Q69014"/>
    </source>
</evidence>
<evidence type="ECO:0000250" key="7">
    <source>
        <dbReference type="UniProtKB" id="Q6XDK8"/>
    </source>
</evidence>
<evidence type="ECO:0000250" key="8">
    <source>
        <dbReference type="UniProtKB" id="Q9QEJ5"/>
    </source>
</evidence>
<evidence type="ECO:0000255" key="9">
    <source>
        <dbReference type="PROSITE-ProRule" id="PRU00539"/>
    </source>
</evidence>
<evidence type="ECO:0000255" key="10">
    <source>
        <dbReference type="PROSITE-ProRule" id="PRU00551"/>
    </source>
</evidence>
<evidence type="ECO:0000255" key="11">
    <source>
        <dbReference type="PROSITE-ProRule" id="PRU01242"/>
    </source>
</evidence>
<evidence type="ECO:0000256" key="12">
    <source>
        <dbReference type="SAM" id="MobiDB-lite"/>
    </source>
</evidence>
<evidence type="ECO:0000305" key="13"/>
<organism>
    <name type="scientific">Sapporo virus (isolate GI/Human/Germany/pJG-Sap01)</name>
    <name type="common">Hu/Dresden/pJG-Sap01/DE</name>
    <dbReference type="NCBI Taxonomy" id="291175"/>
    <lineage>
        <taxon>Viruses</taxon>
        <taxon>Riboviria</taxon>
        <taxon>Orthornavirae</taxon>
        <taxon>Pisuviricota</taxon>
        <taxon>Pisoniviricetes</taxon>
        <taxon>Picornavirales</taxon>
        <taxon>Caliciviridae</taxon>
        <taxon>Sapovirus</taxon>
        <taxon>Sapporo virus</taxon>
    </lineage>
</organism>
<name>POLG_SVSAP</name>
<proteinExistence type="inferred from homology"/>
<organismHost>
    <name type="scientific">Homo sapiens</name>
    <name type="common">Human</name>
    <dbReference type="NCBI Taxonomy" id="9606"/>
</organismHost>
<reference key="1">
    <citation type="journal article" date="2007" name="J. Virol.">
        <title>Structural and functional characterization of sapovirus RNA-dependent RNA polymerase.</title>
        <authorList>
            <person name="Fullerton S.W."/>
            <person name="Blaschke M."/>
            <person name="Coutard B."/>
            <person name="Gebhardt J."/>
            <person name="Gorbalenya A."/>
            <person name="Canard B."/>
            <person name="Tucker P.A."/>
            <person name="Rohayem J."/>
        </authorList>
    </citation>
    <scope>NUCLEOTIDE SEQUENCE [GENOMIC RNA]</scope>
</reference>
<reference key="2">
    <citation type="journal article" date="2021" name="Front. Microbiol.">
        <title>Calicivirus Non-structural Proteins: Potential Functions in Replication and Host Cell Manipulation.</title>
        <authorList>
            <person name="Smertina E."/>
            <person name="Hall R.N."/>
            <person name="Urakova N."/>
            <person name="Strive T."/>
            <person name="Frese M."/>
        </authorList>
    </citation>
    <scope>REVIEW</scope>
</reference>